<evidence type="ECO:0000255" key="1">
    <source>
        <dbReference type="HAMAP-Rule" id="MF_00528"/>
    </source>
</evidence>
<comment type="function">
    <text evidence="1">Nucleoside triphosphate pyrophosphatase that hydrolyzes 7-methyl-GTP (m(7)GTP). May have a dual role in cell division arrest and in preventing the incorporation of modified nucleotides into cellular nucleic acids.</text>
</comment>
<comment type="catalytic activity">
    <reaction evidence="1">
        <text>N(7)-methyl-GTP + H2O = N(7)-methyl-GMP + diphosphate + H(+)</text>
        <dbReference type="Rhea" id="RHEA:58744"/>
        <dbReference type="ChEBI" id="CHEBI:15377"/>
        <dbReference type="ChEBI" id="CHEBI:15378"/>
        <dbReference type="ChEBI" id="CHEBI:33019"/>
        <dbReference type="ChEBI" id="CHEBI:58285"/>
        <dbReference type="ChEBI" id="CHEBI:87133"/>
    </reaction>
</comment>
<comment type="cofactor">
    <cofactor evidence="1">
        <name>a divalent metal cation</name>
        <dbReference type="ChEBI" id="CHEBI:60240"/>
    </cofactor>
</comment>
<comment type="subcellular location">
    <subcellularLocation>
        <location evidence="1">Cytoplasm</location>
    </subcellularLocation>
</comment>
<comment type="similarity">
    <text evidence="1">Belongs to the Maf family. YceF subfamily.</text>
</comment>
<proteinExistence type="inferred from homology"/>
<gene>
    <name type="primary">yceF1</name>
    <name type="ordered locus">SCH_1137</name>
</gene>
<name>NTPPB_SALCH</name>
<protein>
    <recommendedName>
        <fullName evidence="1">7-methyl-GTP pyrophosphatase</fullName>
        <shortName evidence="1">m(7)GTP pyrophosphatase</shortName>
        <ecNumber evidence="1">3.6.1.-</ecNumber>
    </recommendedName>
</protein>
<sequence>MPRLILASTSPWRRALLEKLTIPFECAAPDVDETPMPGEAPRQLVLRLAQAKAQSLAARFPNHLIIGSDQICVLDGEITGKPLTEEKARQQLAKASGNIVTFYTGLALYNSASGQLQTEVEPFDVHFRHLSEAEIDDYVRKEHPLHCAGSFKSEGLGIALFERLEGRDPNTLIGLPLIALCQMLRREGFNPLQQ</sequence>
<dbReference type="EC" id="3.6.1.-" evidence="1"/>
<dbReference type="EMBL" id="AE017220">
    <property type="protein sequence ID" value="AAX65043.1"/>
    <property type="molecule type" value="Genomic_DNA"/>
</dbReference>
<dbReference type="RefSeq" id="WP_001137607.1">
    <property type="nucleotide sequence ID" value="NC_006905.1"/>
</dbReference>
<dbReference type="SMR" id="Q57QG8"/>
<dbReference type="KEGG" id="sec:SCH_1137"/>
<dbReference type="HOGENOM" id="CLU_040416_1_0_6"/>
<dbReference type="Proteomes" id="UP000000538">
    <property type="component" value="Chromosome"/>
</dbReference>
<dbReference type="GO" id="GO:0005737">
    <property type="term" value="C:cytoplasm"/>
    <property type="evidence" value="ECO:0007669"/>
    <property type="project" value="UniProtKB-SubCell"/>
</dbReference>
<dbReference type="GO" id="GO:0047429">
    <property type="term" value="F:nucleoside triphosphate diphosphatase activity"/>
    <property type="evidence" value="ECO:0007669"/>
    <property type="project" value="InterPro"/>
</dbReference>
<dbReference type="GO" id="GO:0009117">
    <property type="term" value="P:nucleotide metabolic process"/>
    <property type="evidence" value="ECO:0007669"/>
    <property type="project" value="UniProtKB-KW"/>
</dbReference>
<dbReference type="CDD" id="cd00555">
    <property type="entry name" value="Maf"/>
    <property type="match status" value="1"/>
</dbReference>
<dbReference type="FunFam" id="3.90.950.10:FF:000005">
    <property type="entry name" value="7-methyl-GTP pyrophosphatase"/>
    <property type="match status" value="1"/>
</dbReference>
<dbReference type="Gene3D" id="3.90.950.10">
    <property type="match status" value="1"/>
</dbReference>
<dbReference type="HAMAP" id="MF_00528">
    <property type="entry name" value="Maf"/>
    <property type="match status" value="1"/>
</dbReference>
<dbReference type="InterPro" id="IPR029001">
    <property type="entry name" value="ITPase-like_fam"/>
</dbReference>
<dbReference type="InterPro" id="IPR003697">
    <property type="entry name" value="Maf-like"/>
</dbReference>
<dbReference type="NCBIfam" id="TIGR00172">
    <property type="entry name" value="maf"/>
    <property type="match status" value="1"/>
</dbReference>
<dbReference type="PANTHER" id="PTHR43213:SF10">
    <property type="entry name" value="7-METHYL-GTP PYROPHOSPHATASE"/>
    <property type="match status" value="1"/>
</dbReference>
<dbReference type="PANTHER" id="PTHR43213">
    <property type="entry name" value="BIFUNCTIONAL DTTP/UTP PYROPHOSPHATASE/METHYLTRANSFERASE PROTEIN-RELATED"/>
    <property type="match status" value="1"/>
</dbReference>
<dbReference type="Pfam" id="PF02545">
    <property type="entry name" value="Maf"/>
    <property type="match status" value="1"/>
</dbReference>
<dbReference type="PIRSF" id="PIRSF006305">
    <property type="entry name" value="Maf"/>
    <property type="match status" value="1"/>
</dbReference>
<dbReference type="SUPFAM" id="SSF52972">
    <property type="entry name" value="ITPase-like"/>
    <property type="match status" value="1"/>
</dbReference>
<organism>
    <name type="scientific">Salmonella choleraesuis (strain SC-B67)</name>
    <dbReference type="NCBI Taxonomy" id="321314"/>
    <lineage>
        <taxon>Bacteria</taxon>
        <taxon>Pseudomonadati</taxon>
        <taxon>Pseudomonadota</taxon>
        <taxon>Gammaproteobacteria</taxon>
        <taxon>Enterobacterales</taxon>
        <taxon>Enterobacteriaceae</taxon>
        <taxon>Salmonella</taxon>
    </lineage>
</organism>
<feature type="chain" id="PRO_0000267419" description="7-methyl-GTP pyrophosphatase">
    <location>
        <begin position="1"/>
        <end position="194"/>
    </location>
</feature>
<feature type="active site" description="Proton acceptor" evidence="1">
    <location>
        <position position="69"/>
    </location>
</feature>
<feature type="site" description="Important for substrate specificity" evidence="1">
    <location>
        <position position="12"/>
    </location>
</feature>
<feature type="site" description="Important for substrate specificity" evidence="1">
    <location>
        <position position="70"/>
    </location>
</feature>
<feature type="site" description="Important for substrate specificity" evidence="1">
    <location>
        <position position="154"/>
    </location>
</feature>
<keyword id="KW-0963">Cytoplasm</keyword>
<keyword id="KW-0378">Hydrolase</keyword>
<keyword id="KW-0546">Nucleotide metabolism</keyword>
<reference key="1">
    <citation type="journal article" date="2005" name="Nucleic Acids Res.">
        <title>The genome sequence of Salmonella enterica serovar Choleraesuis, a highly invasive and resistant zoonotic pathogen.</title>
        <authorList>
            <person name="Chiu C.-H."/>
            <person name="Tang P."/>
            <person name="Chu C."/>
            <person name="Hu S."/>
            <person name="Bao Q."/>
            <person name="Yu J."/>
            <person name="Chou Y.-Y."/>
            <person name="Wang H.-S."/>
            <person name="Lee Y.-S."/>
        </authorList>
    </citation>
    <scope>NUCLEOTIDE SEQUENCE [LARGE SCALE GENOMIC DNA]</scope>
    <source>
        <strain>SC-B67</strain>
    </source>
</reference>
<accession>Q57QG8</accession>